<proteinExistence type="inferred from homology"/>
<name>SYGA_STRT2</name>
<accession>Q5M5H3</accession>
<dbReference type="EC" id="6.1.1.14" evidence="1"/>
<dbReference type="EMBL" id="CP000023">
    <property type="protein sequence ID" value="AAV60214.1"/>
    <property type="molecule type" value="Genomic_DNA"/>
</dbReference>
<dbReference type="RefSeq" id="WP_002949990.1">
    <property type="nucleotide sequence ID" value="NC_006448.1"/>
</dbReference>
<dbReference type="SMR" id="Q5M5H3"/>
<dbReference type="STRING" id="264199.stu0505"/>
<dbReference type="GeneID" id="66898412"/>
<dbReference type="KEGG" id="stl:stu0505"/>
<dbReference type="eggNOG" id="COG0752">
    <property type="taxonomic scope" value="Bacteria"/>
</dbReference>
<dbReference type="HOGENOM" id="CLU_057066_1_0_9"/>
<dbReference type="Proteomes" id="UP000001170">
    <property type="component" value="Chromosome"/>
</dbReference>
<dbReference type="GO" id="GO:0005829">
    <property type="term" value="C:cytosol"/>
    <property type="evidence" value="ECO:0007669"/>
    <property type="project" value="TreeGrafter"/>
</dbReference>
<dbReference type="GO" id="GO:0005524">
    <property type="term" value="F:ATP binding"/>
    <property type="evidence" value="ECO:0007669"/>
    <property type="project" value="UniProtKB-UniRule"/>
</dbReference>
<dbReference type="GO" id="GO:0140096">
    <property type="term" value="F:catalytic activity, acting on a protein"/>
    <property type="evidence" value="ECO:0007669"/>
    <property type="project" value="UniProtKB-ARBA"/>
</dbReference>
<dbReference type="GO" id="GO:0004820">
    <property type="term" value="F:glycine-tRNA ligase activity"/>
    <property type="evidence" value="ECO:0007669"/>
    <property type="project" value="UniProtKB-UniRule"/>
</dbReference>
<dbReference type="GO" id="GO:0016740">
    <property type="term" value="F:transferase activity"/>
    <property type="evidence" value="ECO:0007669"/>
    <property type="project" value="UniProtKB-ARBA"/>
</dbReference>
<dbReference type="GO" id="GO:0006426">
    <property type="term" value="P:glycyl-tRNA aminoacylation"/>
    <property type="evidence" value="ECO:0007669"/>
    <property type="project" value="UniProtKB-UniRule"/>
</dbReference>
<dbReference type="CDD" id="cd00733">
    <property type="entry name" value="GlyRS_alpha_core"/>
    <property type="match status" value="1"/>
</dbReference>
<dbReference type="FunFam" id="3.30.930.10:FF:000006">
    <property type="entry name" value="Glycine--tRNA ligase alpha subunit"/>
    <property type="match status" value="1"/>
</dbReference>
<dbReference type="Gene3D" id="3.30.930.10">
    <property type="entry name" value="Bira Bifunctional Protein, Domain 2"/>
    <property type="match status" value="1"/>
</dbReference>
<dbReference type="Gene3D" id="1.20.58.180">
    <property type="entry name" value="Class II aaRS and biotin synthetases, domain 2"/>
    <property type="match status" value="1"/>
</dbReference>
<dbReference type="HAMAP" id="MF_00254">
    <property type="entry name" value="Gly_tRNA_synth_alpha"/>
    <property type="match status" value="1"/>
</dbReference>
<dbReference type="InterPro" id="IPR045864">
    <property type="entry name" value="aa-tRNA-synth_II/BPL/LPL"/>
</dbReference>
<dbReference type="InterPro" id="IPR006194">
    <property type="entry name" value="Gly-tRNA-synth_heterodimer"/>
</dbReference>
<dbReference type="InterPro" id="IPR002310">
    <property type="entry name" value="Gly-tRNA_ligase_asu"/>
</dbReference>
<dbReference type="NCBIfam" id="TIGR00388">
    <property type="entry name" value="glyQ"/>
    <property type="match status" value="1"/>
</dbReference>
<dbReference type="NCBIfam" id="NF006827">
    <property type="entry name" value="PRK09348.1"/>
    <property type="match status" value="1"/>
</dbReference>
<dbReference type="PANTHER" id="PTHR30075:SF2">
    <property type="entry name" value="GLYCINE--TRNA LIGASE, CHLOROPLASTIC_MITOCHONDRIAL 2"/>
    <property type="match status" value="1"/>
</dbReference>
<dbReference type="PANTHER" id="PTHR30075">
    <property type="entry name" value="GLYCYL-TRNA SYNTHETASE"/>
    <property type="match status" value="1"/>
</dbReference>
<dbReference type="Pfam" id="PF02091">
    <property type="entry name" value="tRNA-synt_2e"/>
    <property type="match status" value="1"/>
</dbReference>
<dbReference type="PRINTS" id="PR01044">
    <property type="entry name" value="TRNASYNTHGA"/>
</dbReference>
<dbReference type="SUPFAM" id="SSF55681">
    <property type="entry name" value="Class II aaRS and biotin synthetases"/>
    <property type="match status" value="1"/>
</dbReference>
<dbReference type="PROSITE" id="PS50861">
    <property type="entry name" value="AA_TRNA_LIGASE_II_GLYAB"/>
    <property type="match status" value="1"/>
</dbReference>
<comment type="catalytic activity">
    <reaction evidence="1">
        <text>tRNA(Gly) + glycine + ATP = glycyl-tRNA(Gly) + AMP + diphosphate</text>
        <dbReference type="Rhea" id="RHEA:16013"/>
        <dbReference type="Rhea" id="RHEA-COMP:9664"/>
        <dbReference type="Rhea" id="RHEA-COMP:9683"/>
        <dbReference type="ChEBI" id="CHEBI:30616"/>
        <dbReference type="ChEBI" id="CHEBI:33019"/>
        <dbReference type="ChEBI" id="CHEBI:57305"/>
        <dbReference type="ChEBI" id="CHEBI:78442"/>
        <dbReference type="ChEBI" id="CHEBI:78522"/>
        <dbReference type="ChEBI" id="CHEBI:456215"/>
        <dbReference type="EC" id="6.1.1.14"/>
    </reaction>
</comment>
<comment type="subunit">
    <text evidence="1">Tetramer of two alpha and two beta subunits.</text>
</comment>
<comment type="subcellular location">
    <subcellularLocation>
        <location evidence="1">Cytoplasm</location>
    </subcellularLocation>
</comment>
<comment type="similarity">
    <text evidence="1">Belongs to the class-II aminoacyl-tRNA synthetase family.</text>
</comment>
<evidence type="ECO:0000255" key="1">
    <source>
        <dbReference type="HAMAP-Rule" id="MF_00254"/>
    </source>
</evidence>
<reference key="1">
    <citation type="journal article" date="2004" name="Nat. Biotechnol.">
        <title>Complete sequence and comparative genome analysis of the dairy bacterium Streptococcus thermophilus.</title>
        <authorList>
            <person name="Bolotin A."/>
            <person name="Quinquis B."/>
            <person name="Renault P."/>
            <person name="Sorokin A."/>
            <person name="Ehrlich S.D."/>
            <person name="Kulakauskas S."/>
            <person name="Lapidus A."/>
            <person name="Goltsman E."/>
            <person name="Mazur M."/>
            <person name="Pusch G.D."/>
            <person name="Fonstein M."/>
            <person name="Overbeek R."/>
            <person name="Kyprides N."/>
            <person name="Purnelle B."/>
            <person name="Prozzi D."/>
            <person name="Ngui K."/>
            <person name="Masuy D."/>
            <person name="Hancy F."/>
            <person name="Burteau S."/>
            <person name="Boutry M."/>
            <person name="Delcour J."/>
            <person name="Goffeau A."/>
            <person name="Hols P."/>
        </authorList>
    </citation>
    <scope>NUCLEOTIDE SEQUENCE [LARGE SCALE GENOMIC DNA]</scope>
    <source>
        <strain>ATCC BAA-250 / LMG 18311</strain>
    </source>
</reference>
<organism>
    <name type="scientific">Streptococcus thermophilus (strain ATCC BAA-250 / LMG 18311)</name>
    <dbReference type="NCBI Taxonomy" id="264199"/>
    <lineage>
        <taxon>Bacteria</taxon>
        <taxon>Bacillati</taxon>
        <taxon>Bacillota</taxon>
        <taxon>Bacilli</taxon>
        <taxon>Lactobacillales</taxon>
        <taxon>Streptococcaceae</taxon>
        <taxon>Streptococcus</taxon>
    </lineage>
</organism>
<keyword id="KW-0030">Aminoacyl-tRNA synthetase</keyword>
<keyword id="KW-0067">ATP-binding</keyword>
<keyword id="KW-0963">Cytoplasm</keyword>
<keyword id="KW-0436">Ligase</keyword>
<keyword id="KW-0547">Nucleotide-binding</keyword>
<keyword id="KW-0648">Protein biosynthesis</keyword>
<keyword id="KW-1185">Reference proteome</keyword>
<protein>
    <recommendedName>
        <fullName evidence="1">Glycine--tRNA ligase alpha subunit</fullName>
        <ecNumber evidence="1">6.1.1.14</ecNumber>
    </recommendedName>
    <alternativeName>
        <fullName evidence="1">Glycyl-tRNA synthetase alpha subunit</fullName>
        <shortName evidence="1">GlyRS</shortName>
    </alternativeName>
</protein>
<gene>
    <name evidence="1" type="primary">glyQ</name>
    <name type="ordered locus">stu0505</name>
</gene>
<feature type="chain" id="PRO_1000047510" description="Glycine--tRNA ligase alpha subunit">
    <location>
        <begin position="1"/>
        <end position="305"/>
    </location>
</feature>
<sequence>MSKKLTFQEIILTLQQYWNDQGCMLMQAYDNEKGAGTMSPYTFLRAIGPEPWNAAYVEPSRRPADGRYGENPNRLYQHHQFQVVMKPSPSNIQELYLESLEKLGINPLEHDVRFVEDNWENPSTGSAGLGWEVWLDGMEITQFTYFQQVGGLATGPVTAEVTYGLERLASYIQEVDSVYDIEWAPGVKYGEIFLQPEYEHSKYSFEVSDQDMLLENFEKFEKEAGRALELGLVHPAYDYVLKCSHTFNLLDARGAVSVTERAGYIARIRNLARVVAKTFVAERKKLGYPLLDEATRKKLLAEEEE</sequence>